<protein>
    <recommendedName>
        <fullName>Low molecular weight protein-tyrosine-phosphatase PtpA</fullName>
        <ecNumber>3.1.3.48</ecNumber>
    </recommendedName>
    <alternativeName>
        <fullName>Phosphotyrosine phosphatase A</fullName>
        <shortName>PTPase A</shortName>
    </alternativeName>
</protein>
<feature type="chain" id="PRO_0000300663" description="Low molecular weight protein-tyrosine-phosphatase PtpA">
    <location>
        <begin position="1"/>
        <end position="154"/>
    </location>
</feature>
<feature type="active site" description="Nucleophile" evidence="2">
    <location>
        <position position="8"/>
    </location>
</feature>
<feature type="active site" evidence="2">
    <location>
        <position position="14"/>
    </location>
</feature>
<feature type="active site" description="Proton donor" evidence="2">
    <location>
        <position position="120"/>
    </location>
</feature>
<organism>
    <name type="scientific">Staphylococcus aureus (strain N315)</name>
    <dbReference type="NCBI Taxonomy" id="158879"/>
    <lineage>
        <taxon>Bacteria</taxon>
        <taxon>Bacillati</taxon>
        <taxon>Bacillota</taxon>
        <taxon>Bacilli</taxon>
        <taxon>Bacillales</taxon>
        <taxon>Staphylococcaceae</taxon>
        <taxon>Staphylococcus</taxon>
    </lineage>
</organism>
<comment type="function">
    <text evidence="1">Secreted tyrosine phosphatase that plays a critical role during infection as a bacterial effector protein that counteracts host defenses. Required for intramacrophage survival.</text>
</comment>
<comment type="catalytic activity">
    <reaction evidence="1">
        <text>O-phospho-L-tyrosyl-[protein] + H2O = L-tyrosyl-[protein] + phosphate</text>
        <dbReference type="Rhea" id="RHEA:10684"/>
        <dbReference type="Rhea" id="RHEA-COMP:10136"/>
        <dbReference type="Rhea" id="RHEA-COMP:20101"/>
        <dbReference type="ChEBI" id="CHEBI:15377"/>
        <dbReference type="ChEBI" id="CHEBI:43474"/>
        <dbReference type="ChEBI" id="CHEBI:46858"/>
        <dbReference type="ChEBI" id="CHEBI:61978"/>
        <dbReference type="EC" id="3.1.3.48"/>
    </reaction>
</comment>
<comment type="subunit">
    <text evidence="1">Interacts with host CORO1A.</text>
</comment>
<comment type="subcellular location">
    <subcellularLocation>
        <location evidence="1">Secreted</location>
    </subcellularLocation>
    <text evidence="1">Secreted intracellularly upon bacterial infection of macrophages.</text>
</comment>
<comment type="PTM">
    <text evidence="1">Phosphorylations at Tyr-122 and Tyr-123 are essential for phosphatase activity.</text>
</comment>
<comment type="similarity">
    <text evidence="3">Belongs to the low molecular weight phosphotyrosine protein phosphatase family.</text>
</comment>
<evidence type="ECO:0000250" key="1">
    <source>
        <dbReference type="UniProtKB" id="A0A0H3K9F2"/>
    </source>
</evidence>
<evidence type="ECO:0000250" key="2">
    <source>
        <dbReference type="UniProtKB" id="P11064"/>
    </source>
</evidence>
<evidence type="ECO:0000305" key="3"/>
<gene>
    <name type="primary">ptpA</name>
    <name type="ordered locus">SA1697</name>
</gene>
<name>PTPA_STAAN</name>
<keyword id="KW-0378">Hydrolase</keyword>
<keyword id="KW-0597">Phosphoprotein</keyword>
<keyword id="KW-0904">Protein phosphatase</keyword>
<keyword id="KW-0964">Secreted</keyword>
<sequence length="154" mass="17491">MVDVAFVCLGNICRSPMAEAIMRQRLKDRNIHDIKVHSRGTGSWNLGEPPHEGTQKILNKHNIPFDGMISELFEATDDFDYIVAMDQSNVDNIKSINPNLKGQLFKLLEFSNMEESDVPDPYYTNNFEGVYDMVLSSCDNLIDYIVKDANLKEG</sequence>
<reference key="1">
    <citation type="journal article" date="2001" name="Lancet">
        <title>Whole genome sequencing of meticillin-resistant Staphylococcus aureus.</title>
        <authorList>
            <person name="Kuroda M."/>
            <person name="Ohta T."/>
            <person name="Uchiyama I."/>
            <person name="Baba T."/>
            <person name="Yuzawa H."/>
            <person name="Kobayashi I."/>
            <person name="Cui L."/>
            <person name="Oguchi A."/>
            <person name="Aoki K."/>
            <person name="Nagai Y."/>
            <person name="Lian J.-Q."/>
            <person name="Ito T."/>
            <person name="Kanamori M."/>
            <person name="Matsumaru H."/>
            <person name="Maruyama A."/>
            <person name="Murakami H."/>
            <person name="Hosoyama A."/>
            <person name="Mizutani-Ui Y."/>
            <person name="Takahashi N.K."/>
            <person name="Sawano T."/>
            <person name="Inoue R."/>
            <person name="Kaito C."/>
            <person name="Sekimizu K."/>
            <person name="Hirakawa H."/>
            <person name="Kuhara S."/>
            <person name="Goto S."/>
            <person name="Yabuzaki J."/>
            <person name="Kanehisa M."/>
            <person name="Yamashita A."/>
            <person name="Oshima K."/>
            <person name="Furuya K."/>
            <person name="Yoshino C."/>
            <person name="Shiba T."/>
            <person name="Hattori M."/>
            <person name="Ogasawara N."/>
            <person name="Hayashi H."/>
            <person name="Hiramatsu K."/>
        </authorList>
    </citation>
    <scope>NUCLEOTIDE SEQUENCE [LARGE SCALE GENOMIC DNA]</scope>
    <source>
        <strain>N315</strain>
    </source>
</reference>
<reference key="2">
    <citation type="submission" date="2007-10" db="UniProtKB">
        <title>Shotgun proteomic analysis of total and membrane protein extracts of S. aureus strain N315.</title>
        <authorList>
            <person name="Vaezzadeh A.R."/>
            <person name="Deshusses J."/>
            <person name="Lescuyer P."/>
            <person name="Hochstrasser D.F."/>
        </authorList>
    </citation>
    <scope>IDENTIFICATION BY MASS SPECTROMETRY [LARGE SCALE ANALYSIS]</scope>
    <source>
        <strain>N315</strain>
    </source>
</reference>
<accession>Q7A4S1</accession>
<proteinExistence type="evidence at protein level"/>
<dbReference type="EC" id="3.1.3.48"/>
<dbReference type="EMBL" id="BA000018">
    <property type="protein sequence ID" value="BAB42967.1"/>
    <property type="molecule type" value="Genomic_DNA"/>
</dbReference>
<dbReference type="PIR" id="H89975">
    <property type="entry name" value="H89975"/>
</dbReference>
<dbReference type="RefSeq" id="WP_000228666.1">
    <property type="nucleotide sequence ID" value="NC_002745.2"/>
</dbReference>
<dbReference type="SMR" id="Q7A4S1"/>
<dbReference type="EnsemblBacteria" id="BAB42967">
    <property type="protein sequence ID" value="BAB42967"/>
    <property type="gene ID" value="BAB42967"/>
</dbReference>
<dbReference type="KEGG" id="sau:SA1697"/>
<dbReference type="HOGENOM" id="CLU_071415_2_3_9"/>
<dbReference type="GO" id="GO:0005576">
    <property type="term" value="C:extracellular region"/>
    <property type="evidence" value="ECO:0007669"/>
    <property type="project" value="UniProtKB-SubCell"/>
</dbReference>
<dbReference type="GO" id="GO:0004725">
    <property type="term" value="F:protein tyrosine phosphatase activity"/>
    <property type="evidence" value="ECO:0007669"/>
    <property type="project" value="UniProtKB-EC"/>
</dbReference>
<dbReference type="CDD" id="cd16343">
    <property type="entry name" value="LMWPTP"/>
    <property type="match status" value="1"/>
</dbReference>
<dbReference type="FunFam" id="3.40.50.2300:FF:000268">
    <property type="entry name" value="Low molecular weight protein-tyrosine-phosphatase PtpA"/>
    <property type="match status" value="1"/>
</dbReference>
<dbReference type="Gene3D" id="3.40.50.2300">
    <property type="match status" value="1"/>
</dbReference>
<dbReference type="InterPro" id="IPR050438">
    <property type="entry name" value="LMW_PTPase"/>
</dbReference>
<dbReference type="InterPro" id="IPR023485">
    <property type="entry name" value="Ptyr_pPase"/>
</dbReference>
<dbReference type="InterPro" id="IPR036196">
    <property type="entry name" value="Ptyr_pPase_sf"/>
</dbReference>
<dbReference type="InterPro" id="IPR017867">
    <property type="entry name" value="Tyr_phospatase_low_mol_wt"/>
</dbReference>
<dbReference type="PANTHER" id="PTHR11717:SF7">
    <property type="entry name" value="LOW MOLECULAR WEIGHT PHOSPHOTYROSINE PROTEIN PHOSPHATASE"/>
    <property type="match status" value="1"/>
</dbReference>
<dbReference type="PANTHER" id="PTHR11717">
    <property type="entry name" value="LOW MOLECULAR WEIGHT PROTEIN TYROSINE PHOSPHATASE"/>
    <property type="match status" value="1"/>
</dbReference>
<dbReference type="Pfam" id="PF01451">
    <property type="entry name" value="LMWPc"/>
    <property type="match status" value="1"/>
</dbReference>
<dbReference type="PRINTS" id="PR00719">
    <property type="entry name" value="LMWPTPASE"/>
</dbReference>
<dbReference type="SMART" id="SM00226">
    <property type="entry name" value="LMWPc"/>
    <property type="match status" value="1"/>
</dbReference>
<dbReference type="SUPFAM" id="SSF52788">
    <property type="entry name" value="Phosphotyrosine protein phosphatases I"/>
    <property type="match status" value="1"/>
</dbReference>